<protein>
    <recommendedName>
        <fullName>Violet-sensitive opsin</fullName>
    </recommendedName>
    <alternativeName>
        <fullName>Violet cone opsin</fullName>
    </alternativeName>
    <alternativeName>
        <fullName>Violet cone photoreceptor pigment</fullName>
    </alternativeName>
</protein>
<dbReference type="EMBL" id="U23463">
    <property type="protein sequence ID" value="AAA64418.1"/>
    <property type="molecule type" value="mRNA"/>
</dbReference>
<dbReference type="EMBL" id="BC084882">
    <property type="protein sequence ID" value="AAH84882.1"/>
    <property type="molecule type" value="mRNA"/>
</dbReference>
<dbReference type="RefSeq" id="NP_001079121.1">
    <property type="nucleotide sequence ID" value="NM_001085652.1"/>
</dbReference>
<dbReference type="SMR" id="P51473"/>
<dbReference type="DNASU" id="373655"/>
<dbReference type="GeneID" id="373655"/>
<dbReference type="KEGG" id="xla:373655"/>
<dbReference type="AGR" id="Xenbase:XB-GENE-993056"/>
<dbReference type="CTD" id="373655"/>
<dbReference type="Xenbase" id="XB-GENE-993056">
    <property type="gene designation" value="opn1sw.L"/>
</dbReference>
<dbReference type="OMA" id="QTAFMGF"/>
<dbReference type="OrthoDB" id="6142583at2759"/>
<dbReference type="Proteomes" id="UP000186698">
    <property type="component" value="Chromosome 3L"/>
</dbReference>
<dbReference type="Bgee" id="373655">
    <property type="expression patterns" value="Expressed in camera-type eye and 2 other cell types or tissues"/>
</dbReference>
<dbReference type="GO" id="GO:0001750">
    <property type="term" value="C:photoreceptor outer segment"/>
    <property type="evidence" value="ECO:0000318"/>
    <property type="project" value="GO_Central"/>
</dbReference>
<dbReference type="GO" id="GO:0005886">
    <property type="term" value="C:plasma membrane"/>
    <property type="evidence" value="ECO:0000318"/>
    <property type="project" value="GO_Central"/>
</dbReference>
<dbReference type="GO" id="GO:0008020">
    <property type="term" value="F:G protein-coupled photoreceptor activity"/>
    <property type="evidence" value="ECO:0000318"/>
    <property type="project" value="GO_Central"/>
</dbReference>
<dbReference type="GO" id="GO:0071482">
    <property type="term" value="P:cellular response to light stimulus"/>
    <property type="evidence" value="ECO:0000318"/>
    <property type="project" value="GO_Central"/>
</dbReference>
<dbReference type="GO" id="GO:0007186">
    <property type="term" value="P:G protein-coupled receptor signaling pathway"/>
    <property type="evidence" value="ECO:0000318"/>
    <property type="project" value="GO_Central"/>
</dbReference>
<dbReference type="GO" id="GO:0007602">
    <property type="term" value="P:phototransduction"/>
    <property type="evidence" value="ECO:0000318"/>
    <property type="project" value="GO_Central"/>
</dbReference>
<dbReference type="GO" id="GO:0007601">
    <property type="term" value="P:visual perception"/>
    <property type="evidence" value="ECO:0007669"/>
    <property type="project" value="UniProtKB-KW"/>
</dbReference>
<dbReference type="CDD" id="cd15076">
    <property type="entry name" value="7tmA_SWS1_opsin"/>
    <property type="match status" value="1"/>
</dbReference>
<dbReference type="FunFam" id="1.20.1070.10:FF:000018">
    <property type="entry name" value="Rhodopsin"/>
    <property type="match status" value="1"/>
</dbReference>
<dbReference type="Gene3D" id="1.20.1070.10">
    <property type="entry name" value="Rhodopsin 7-helix transmembrane proteins"/>
    <property type="match status" value="1"/>
</dbReference>
<dbReference type="InterPro" id="IPR050125">
    <property type="entry name" value="GPCR_opsins"/>
</dbReference>
<dbReference type="InterPro" id="IPR000276">
    <property type="entry name" value="GPCR_Rhodpsn"/>
</dbReference>
<dbReference type="InterPro" id="IPR017452">
    <property type="entry name" value="GPCR_Rhodpsn_7TM"/>
</dbReference>
<dbReference type="InterPro" id="IPR001760">
    <property type="entry name" value="Opsin"/>
</dbReference>
<dbReference type="InterPro" id="IPR001521">
    <property type="entry name" value="Opsin_blue"/>
</dbReference>
<dbReference type="InterPro" id="IPR027430">
    <property type="entry name" value="Retinal_BS"/>
</dbReference>
<dbReference type="PANTHER" id="PTHR24240">
    <property type="entry name" value="OPSIN"/>
    <property type="match status" value="1"/>
</dbReference>
<dbReference type="Pfam" id="PF00001">
    <property type="entry name" value="7tm_1"/>
    <property type="match status" value="1"/>
</dbReference>
<dbReference type="PRINTS" id="PR00237">
    <property type="entry name" value="GPCRRHODOPSN"/>
</dbReference>
<dbReference type="PRINTS" id="PR00238">
    <property type="entry name" value="OPSIN"/>
</dbReference>
<dbReference type="PRINTS" id="PR00574">
    <property type="entry name" value="OPSINBLUE"/>
</dbReference>
<dbReference type="SUPFAM" id="SSF81321">
    <property type="entry name" value="Family A G protein-coupled receptor-like"/>
    <property type="match status" value="1"/>
</dbReference>
<dbReference type="PROSITE" id="PS00237">
    <property type="entry name" value="G_PROTEIN_RECEP_F1_1"/>
    <property type="match status" value="1"/>
</dbReference>
<dbReference type="PROSITE" id="PS50262">
    <property type="entry name" value="G_PROTEIN_RECEP_F1_2"/>
    <property type="match status" value="1"/>
</dbReference>
<dbReference type="PROSITE" id="PS00238">
    <property type="entry name" value="OPSIN"/>
    <property type="match status" value="1"/>
</dbReference>
<accession>P51473</accession>
<accession>Q5U505</accession>
<organism>
    <name type="scientific">Xenopus laevis</name>
    <name type="common">African clawed frog</name>
    <dbReference type="NCBI Taxonomy" id="8355"/>
    <lineage>
        <taxon>Eukaryota</taxon>
        <taxon>Metazoa</taxon>
        <taxon>Chordata</taxon>
        <taxon>Craniata</taxon>
        <taxon>Vertebrata</taxon>
        <taxon>Euteleostomi</taxon>
        <taxon>Amphibia</taxon>
        <taxon>Batrachia</taxon>
        <taxon>Anura</taxon>
        <taxon>Pipoidea</taxon>
        <taxon>Pipidae</taxon>
        <taxon>Xenopodinae</taxon>
        <taxon>Xenopus</taxon>
        <taxon>Xenopus</taxon>
    </lineage>
</organism>
<feature type="chain" id="PRO_0000197770" description="Violet-sensitive opsin">
    <location>
        <begin position="1"/>
        <end position="347"/>
    </location>
</feature>
<feature type="topological domain" description="Extracellular">
    <location>
        <begin position="1"/>
        <end position="31"/>
    </location>
</feature>
<feature type="transmembrane region" description="Helical; Name=1" evidence="2">
    <location>
        <begin position="32"/>
        <end position="56"/>
    </location>
</feature>
<feature type="topological domain" description="Cytoplasmic">
    <location>
        <begin position="57"/>
        <end position="68"/>
    </location>
</feature>
<feature type="transmembrane region" description="Helical; Name=2" evidence="2">
    <location>
        <begin position="69"/>
        <end position="94"/>
    </location>
</feature>
<feature type="topological domain" description="Extracellular">
    <location>
        <begin position="95"/>
        <end position="108"/>
    </location>
</feature>
<feature type="transmembrane region" description="Helical; Name=3" evidence="2">
    <location>
        <begin position="109"/>
        <end position="128"/>
    </location>
</feature>
<feature type="topological domain" description="Cytoplasmic">
    <location>
        <begin position="129"/>
        <end position="147"/>
    </location>
</feature>
<feature type="transmembrane region" description="Helical; Name=4" evidence="2">
    <location>
        <begin position="148"/>
        <end position="171"/>
    </location>
</feature>
<feature type="topological domain" description="Extracellular">
    <location>
        <begin position="172"/>
        <end position="197"/>
    </location>
</feature>
<feature type="transmembrane region" description="Helical; Name=5" evidence="2">
    <location>
        <begin position="198"/>
        <end position="225"/>
    </location>
</feature>
<feature type="topological domain" description="Cytoplasmic">
    <location>
        <begin position="226"/>
        <end position="247"/>
    </location>
</feature>
<feature type="transmembrane region" description="Helical; Name=6" evidence="2">
    <location>
        <begin position="248"/>
        <end position="271"/>
    </location>
</feature>
<feature type="topological domain" description="Extracellular">
    <location>
        <begin position="272"/>
        <end position="279"/>
    </location>
</feature>
<feature type="transmembrane region" description="Helical; Name=7" evidence="2">
    <location>
        <begin position="280"/>
        <end position="304"/>
    </location>
</feature>
<feature type="topological domain" description="Cytoplasmic">
    <location>
        <begin position="305"/>
        <end position="347"/>
    </location>
</feature>
<feature type="region of interest" description="Disordered" evidence="4">
    <location>
        <begin position="323"/>
        <end position="347"/>
    </location>
</feature>
<feature type="modified residue" description="N6-(retinylidene)lysine" evidence="1">
    <location>
        <position position="291"/>
    </location>
</feature>
<feature type="glycosylation site" description="N-linked (GlcNAc...) asparagine" evidence="5">
    <location>
        <position position="12"/>
    </location>
</feature>
<feature type="disulfide bond" evidence="3">
    <location>
        <begin position="105"/>
        <end position="182"/>
    </location>
</feature>
<reference key="1">
    <citation type="journal article" date="1998" name="Exp. Eye Res.">
        <title>Cloning and expression of a Xenopus short wavelength cone pigment.</title>
        <authorList>
            <person name="Starace D.M."/>
            <person name="Knox B.E."/>
        </authorList>
    </citation>
    <scope>NUCLEOTIDE SEQUENCE [MRNA]</scope>
    <source>
        <tissue>Retina</tissue>
    </source>
</reference>
<reference key="2">
    <citation type="submission" date="2004-10" db="EMBL/GenBank/DDBJ databases">
        <authorList>
            <consortium name="NIH - Xenopus Gene Collection (XGC) project"/>
        </authorList>
    </citation>
    <scope>NUCLEOTIDE SEQUENCE [LARGE SCALE MRNA]</scope>
    <source>
        <tissue>Brain</tissue>
    </source>
</reference>
<keyword id="KW-0157">Chromophore</keyword>
<keyword id="KW-1015">Disulfide bond</keyword>
<keyword id="KW-0297">G-protein coupled receptor</keyword>
<keyword id="KW-0325">Glycoprotein</keyword>
<keyword id="KW-0472">Membrane</keyword>
<keyword id="KW-0597">Phosphoprotein</keyword>
<keyword id="KW-0600">Photoreceptor protein</keyword>
<keyword id="KW-0675">Receptor</keyword>
<keyword id="KW-1185">Reference proteome</keyword>
<keyword id="KW-0681">Retinal protein</keyword>
<keyword id="KW-0716">Sensory transduction</keyword>
<keyword id="KW-0807">Transducer</keyword>
<keyword id="KW-0812">Transmembrane</keyword>
<keyword id="KW-1133">Transmembrane helix</keyword>
<keyword id="KW-0844">Vision</keyword>
<proteinExistence type="evidence at protein level"/>
<comment type="function">
    <text>Visual pigments are the light-absorbing molecules that mediate vision. They consist of an apoprotein, opsin, covalently linked to cis-retinal.</text>
</comment>
<comment type="biophysicochemical properties">
    <absorption>
        <max>425 nm</max>
    </absorption>
</comment>
<comment type="subcellular location">
    <subcellularLocation>
        <location>Membrane</location>
        <topology>Multi-pass membrane protein</topology>
    </subcellularLocation>
</comment>
<comment type="tissue specificity">
    <text>The color pigments are found in the cone photoreceptor cells.</text>
</comment>
<comment type="PTM">
    <text>Phosphorylated on some or all of the serine and threonine residues present in the C-terminal region.</text>
</comment>
<comment type="similarity">
    <text evidence="3">Belongs to the G-protein coupled receptor 1 family. Opsin subfamily.</text>
</comment>
<sequence length="347" mass="39000">MLEEEDFYLFKNVSNVSPFDGPQYHIAPKWAFTLQAIFMGMVFLIGTPLNFIVLLVTIKYKKLRQPLNYILVNITVGGFLMCIFSIFPVFVSSSQGYFFFGRIACSIDAFVGTLTGLVTGWSLAFLAFERYIVICKPMGNFNFSSSHALAVVICTWIIGIVVSVPPFLGWSRYMPEGLQCSCGPDWYTVGTKYRSEYYTWFIFIFCFVIPLSLICFSYGRLLGALRAVAAQQQESASTQKAEREVSRMVIFMVGSFCLCYVPYAAMAMYMVTNRNHGLDLRLVTIPAFFSKSSCVYNPIIYSFMNKQFRGCIMETVCGRPMSDDSSVSSTSQRTEVSTVSSSQVSPA</sequence>
<evidence type="ECO:0000250" key="1"/>
<evidence type="ECO:0000255" key="2"/>
<evidence type="ECO:0000255" key="3">
    <source>
        <dbReference type="PROSITE-ProRule" id="PRU00521"/>
    </source>
</evidence>
<evidence type="ECO:0000256" key="4">
    <source>
        <dbReference type="SAM" id="MobiDB-lite"/>
    </source>
</evidence>
<evidence type="ECO:0000305" key="5"/>
<name>OPSV_XENLA</name>